<name>TEKL1_HUMAN</name>
<dbReference type="EMBL" id="AK097684">
    <property type="protein sequence ID" value="BAC05142.1"/>
    <property type="molecule type" value="mRNA"/>
</dbReference>
<dbReference type="EMBL" id="AC004659">
    <property type="status" value="NOT_ANNOTATED_CDS"/>
    <property type="molecule type" value="Genomic_DNA"/>
</dbReference>
<dbReference type="EMBL" id="AC104528">
    <property type="status" value="NOT_ANNOTATED_CDS"/>
    <property type="molecule type" value="Genomic_DNA"/>
</dbReference>
<dbReference type="EMBL" id="BC035678">
    <property type="protein sequence ID" value="AAH35678.1"/>
    <property type="molecule type" value="mRNA"/>
</dbReference>
<dbReference type="EMBL" id="AL833847">
    <property type="protein sequence ID" value="CAD38706.1"/>
    <property type="molecule type" value="mRNA"/>
</dbReference>
<dbReference type="CCDS" id="CCDS12322.1"/>
<dbReference type="RefSeq" id="NP_775753.2">
    <property type="nucleotide sequence ID" value="NM_173482.3"/>
</dbReference>
<dbReference type="SMR" id="Q8IYK2"/>
<dbReference type="BioGRID" id="125989">
    <property type="interactions" value="4"/>
</dbReference>
<dbReference type="FunCoup" id="Q8IYK2">
    <property type="interactions" value="52"/>
</dbReference>
<dbReference type="IntAct" id="Q8IYK2">
    <property type="interactions" value="3"/>
</dbReference>
<dbReference type="STRING" id="9606.ENSP00000292574"/>
<dbReference type="GlyGen" id="Q8IYK2">
    <property type="glycosylation" value="1 site, 1 O-linked glycan (1 site)"/>
</dbReference>
<dbReference type="iPTMnet" id="Q8IYK2"/>
<dbReference type="PhosphoSitePlus" id="Q8IYK2"/>
<dbReference type="BioMuta" id="CCDC105"/>
<dbReference type="DMDM" id="296439422"/>
<dbReference type="jPOST" id="Q8IYK2"/>
<dbReference type="MassIVE" id="Q8IYK2"/>
<dbReference type="PaxDb" id="9606-ENSP00000292574"/>
<dbReference type="PeptideAtlas" id="Q8IYK2"/>
<dbReference type="ProteomicsDB" id="71191"/>
<dbReference type="Antibodypedia" id="59288">
    <property type="antibodies" value="25 antibodies from 13 providers"/>
</dbReference>
<dbReference type="DNASU" id="126402"/>
<dbReference type="Ensembl" id="ENST00000292574.4">
    <property type="protein sequence ID" value="ENSP00000292574.2"/>
    <property type="gene ID" value="ENSG00000160994.4"/>
</dbReference>
<dbReference type="GeneID" id="126402"/>
<dbReference type="KEGG" id="hsa:126402"/>
<dbReference type="MANE-Select" id="ENST00000292574.4">
    <property type="protein sequence ID" value="ENSP00000292574.2"/>
    <property type="RefSeq nucleotide sequence ID" value="NM_173482.3"/>
    <property type="RefSeq protein sequence ID" value="NP_775753.2"/>
</dbReference>
<dbReference type="UCSC" id="uc002nae.3">
    <property type="organism name" value="human"/>
</dbReference>
<dbReference type="AGR" id="HGNC:26866"/>
<dbReference type="CTD" id="126402"/>
<dbReference type="GeneCards" id="TEKTL1"/>
<dbReference type="HGNC" id="HGNC:26866">
    <property type="gene designation" value="TEKTL1"/>
</dbReference>
<dbReference type="HPA" id="ENSG00000160994">
    <property type="expression patterns" value="Tissue enriched (testis)"/>
</dbReference>
<dbReference type="neXtProt" id="NX_Q8IYK2"/>
<dbReference type="OpenTargets" id="ENSG00000160994"/>
<dbReference type="PharmGKB" id="PA145008634"/>
<dbReference type="VEuPathDB" id="HostDB:ENSG00000160994"/>
<dbReference type="eggNOG" id="ENOG502RUEW">
    <property type="taxonomic scope" value="Eukaryota"/>
</dbReference>
<dbReference type="GeneTree" id="ENSGT00390000003207"/>
<dbReference type="HOGENOM" id="CLU_052125_0_0_1"/>
<dbReference type="InParanoid" id="Q8IYK2"/>
<dbReference type="OMA" id="YTPECAT"/>
<dbReference type="OrthoDB" id="6113at9604"/>
<dbReference type="PAN-GO" id="Q8IYK2">
    <property type="GO annotations" value="0 GO annotations based on evolutionary models"/>
</dbReference>
<dbReference type="PhylomeDB" id="Q8IYK2"/>
<dbReference type="TreeFam" id="TF329813"/>
<dbReference type="PathwayCommons" id="Q8IYK2"/>
<dbReference type="SignaLink" id="Q8IYK2"/>
<dbReference type="BioGRID-ORCS" id="126402">
    <property type="hits" value="8 hits in 1142 CRISPR screens"/>
</dbReference>
<dbReference type="ChiTaRS" id="CCDC105">
    <property type="organism name" value="human"/>
</dbReference>
<dbReference type="GenomeRNAi" id="126402"/>
<dbReference type="Pharos" id="Q8IYK2">
    <property type="development level" value="Tdark"/>
</dbReference>
<dbReference type="PRO" id="PR:Q8IYK2"/>
<dbReference type="Proteomes" id="UP000005640">
    <property type="component" value="Chromosome 19"/>
</dbReference>
<dbReference type="RNAct" id="Q8IYK2">
    <property type="molecule type" value="protein"/>
</dbReference>
<dbReference type="Bgee" id="ENSG00000160994">
    <property type="expression patterns" value="Expressed in left testis and 12 other cell types or tissues"/>
</dbReference>
<dbReference type="GO" id="GO:0160112">
    <property type="term" value="C:axonemal B tubule inner sheath"/>
    <property type="evidence" value="ECO:0000250"/>
    <property type="project" value="UniProtKB"/>
</dbReference>
<dbReference type="GO" id="GO:0070062">
    <property type="term" value="C:extracellular exosome"/>
    <property type="evidence" value="ECO:0007005"/>
    <property type="project" value="UniProtKB"/>
</dbReference>
<dbReference type="GO" id="GO:0036126">
    <property type="term" value="C:sperm flagellum"/>
    <property type="evidence" value="ECO:0000250"/>
    <property type="project" value="UniProtKB"/>
</dbReference>
<dbReference type="GO" id="GO:0030317">
    <property type="term" value="P:flagellated sperm motility"/>
    <property type="evidence" value="ECO:0000250"/>
    <property type="project" value="UniProtKB"/>
</dbReference>
<dbReference type="InterPro" id="IPR048256">
    <property type="entry name" value="Tektin-like"/>
</dbReference>
<dbReference type="InterPro" id="IPR038949">
    <property type="entry name" value="TEKTL1"/>
</dbReference>
<dbReference type="PANTHER" id="PTHR35081">
    <property type="entry name" value="COILED-COIL DOMAIN-CONTAINING PROTEIN 105"/>
    <property type="match status" value="1"/>
</dbReference>
<dbReference type="PANTHER" id="PTHR35081:SF1">
    <property type="entry name" value="COILED-COIL DOMAIN-CONTAINING PROTEIN 105"/>
    <property type="match status" value="1"/>
</dbReference>
<dbReference type="Pfam" id="PF03148">
    <property type="entry name" value="Tektin"/>
    <property type="match status" value="1"/>
</dbReference>
<keyword id="KW-0966">Cell projection</keyword>
<keyword id="KW-0969">Cilium</keyword>
<keyword id="KW-0175">Coiled coil</keyword>
<keyword id="KW-0963">Cytoplasm</keyword>
<keyword id="KW-0206">Cytoskeleton</keyword>
<keyword id="KW-0282">Flagellum</keyword>
<keyword id="KW-0597">Phosphoprotein</keyword>
<keyword id="KW-1267">Proteomics identification</keyword>
<keyword id="KW-1185">Reference proteome</keyword>
<proteinExistence type="evidence at protein level"/>
<organism>
    <name type="scientific">Homo sapiens</name>
    <name type="common">Human</name>
    <dbReference type="NCBI Taxonomy" id="9606"/>
    <lineage>
        <taxon>Eukaryota</taxon>
        <taxon>Metazoa</taxon>
        <taxon>Chordata</taxon>
        <taxon>Craniata</taxon>
        <taxon>Vertebrata</taxon>
        <taxon>Euteleostomi</taxon>
        <taxon>Mammalia</taxon>
        <taxon>Eutheria</taxon>
        <taxon>Euarchontoglires</taxon>
        <taxon>Primates</taxon>
        <taxon>Haplorrhini</taxon>
        <taxon>Catarrhini</taxon>
        <taxon>Hominidae</taxon>
        <taxon>Homo</taxon>
    </lineage>
</organism>
<sequence length="499" mass="56909">MRVLVPPAERSQDTRVGAPAWREAAQAMARTAHILTDRCGQEAVTMWQPKDSVLDPNVAHHLGRAAYIQPWRFRVEMIKGGGTLEKPPPGEGVTLWKGKMKPPAWYARLPLPLHRKARALQTTEVVHAHARGARLTAARLGRAQHQINGRVRQLLRQREVTDHRLSEVRKGLLINQQSVKLRGYRPKSEKVPDKADSMLTWEKEELKSMKRKMERDMEKSEVLLKTLASCRDTLNFCFKERLQAVDLMNQPLDKVLEQARRHSWVNLSRAPTPRTQGQKTPPPDPVGTYNPACALALNEAKRLLVESKDTLVEMAKNEVDVREQQLQISDRVCASLAQKASETLELKERLNMTLGLMRGTILRCTKYNQELYTTHGLIKGPLSKVHLETAEKLDRPLVRMYQRHVGTQLPEAARLAQGTDKLQCHITYLEKNLDELLATHKNLSWGLNCKNIGHEVDGNVVRLRLRQRQPHVCYEQAQRLVKDWDPRTPPPRSKSSADP</sequence>
<feature type="chain" id="PRO_0000279391" description="Tektin-like protein 1">
    <location>
        <begin position="1"/>
        <end position="499"/>
    </location>
</feature>
<feature type="coiled-coil region" evidence="2">
    <location>
        <begin position="197"/>
        <end position="227"/>
    </location>
</feature>
<feature type="coiled-coil region" evidence="2">
    <location>
        <begin position="297"/>
        <end position="317"/>
    </location>
</feature>
<feature type="modified residue" description="Phosphotyrosine" evidence="1">
    <location>
        <position position="372"/>
    </location>
</feature>
<feature type="sequence variant" id="VAR_056774" description="In dbSNP:rs35352238.">
    <original>V</original>
    <variation>M</variation>
    <location>
        <position position="245"/>
    </location>
</feature>
<feature type="sequence variant" id="VAR_056775" description="In dbSNP:rs34375549.">
    <original>M</original>
    <variation>T</variation>
    <location>
        <position position="248"/>
    </location>
</feature>
<feature type="sequence variant" id="VAR_030875" description="In dbSNP:rs17855585." evidence="3">
    <original>D</original>
    <variation>E</variation>
    <location>
        <position position="434"/>
    </location>
</feature>
<feature type="sequence variant" id="VAR_030876" description="In dbSNP:rs8111625." evidence="3 4">
    <original>S</original>
    <variation>T</variation>
    <location>
        <position position="444"/>
    </location>
</feature>
<feature type="sequence variant" id="VAR_030877" description="In dbSNP:rs8112667.">
    <original>P</original>
    <variation>T</variation>
    <location>
        <position position="499"/>
    </location>
</feature>
<accession>Q8IYK2</accession>
<accession>Q8N7T5</accession>
<accession>Q8NDL5</accession>
<gene>
    <name evidence="5" type="primary">TEKTL1</name>
    <name type="synonym">CCDC105</name>
</gene>
<reference key="1">
    <citation type="journal article" date="2004" name="Nat. Genet.">
        <title>Complete sequencing and characterization of 21,243 full-length human cDNAs.</title>
        <authorList>
            <person name="Ota T."/>
            <person name="Suzuki Y."/>
            <person name="Nishikawa T."/>
            <person name="Otsuki T."/>
            <person name="Sugiyama T."/>
            <person name="Irie R."/>
            <person name="Wakamatsu A."/>
            <person name="Hayashi K."/>
            <person name="Sato H."/>
            <person name="Nagai K."/>
            <person name="Kimura K."/>
            <person name="Makita H."/>
            <person name="Sekine M."/>
            <person name="Obayashi M."/>
            <person name="Nishi T."/>
            <person name="Shibahara T."/>
            <person name="Tanaka T."/>
            <person name="Ishii S."/>
            <person name="Yamamoto J."/>
            <person name="Saito K."/>
            <person name="Kawai Y."/>
            <person name="Isono Y."/>
            <person name="Nakamura Y."/>
            <person name="Nagahari K."/>
            <person name="Murakami K."/>
            <person name="Yasuda T."/>
            <person name="Iwayanagi T."/>
            <person name="Wagatsuma M."/>
            <person name="Shiratori A."/>
            <person name="Sudo H."/>
            <person name="Hosoiri T."/>
            <person name="Kaku Y."/>
            <person name="Kodaira H."/>
            <person name="Kondo H."/>
            <person name="Sugawara M."/>
            <person name="Takahashi M."/>
            <person name="Kanda K."/>
            <person name="Yokoi T."/>
            <person name="Furuya T."/>
            <person name="Kikkawa E."/>
            <person name="Omura Y."/>
            <person name="Abe K."/>
            <person name="Kamihara K."/>
            <person name="Katsuta N."/>
            <person name="Sato K."/>
            <person name="Tanikawa M."/>
            <person name="Yamazaki M."/>
            <person name="Ninomiya K."/>
            <person name="Ishibashi T."/>
            <person name="Yamashita H."/>
            <person name="Murakawa K."/>
            <person name="Fujimori K."/>
            <person name="Tanai H."/>
            <person name="Kimata M."/>
            <person name="Watanabe M."/>
            <person name="Hiraoka S."/>
            <person name="Chiba Y."/>
            <person name="Ishida S."/>
            <person name="Ono Y."/>
            <person name="Takiguchi S."/>
            <person name="Watanabe S."/>
            <person name="Yosida M."/>
            <person name="Hotuta T."/>
            <person name="Kusano J."/>
            <person name="Kanehori K."/>
            <person name="Takahashi-Fujii A."/>
            <person name="Hara H."/>
            <person name="Tanase T.-O."/>
            <person name="Nomura Y."/>
            <person name="Togiya S."/>
            <person name="Komai F."/>
            <person name="Hara R."/>
            <person name="Takeuchi K."/>
            <person name="Arita M."/>
            <person name="Imose N."/>
            <person name="Musashino K."/>
            <person name="Yuuki H."/>
            <person name="Oshima A."/>
            <person name="Sasaki N."/>
            <person name="Aotsuka S."/>
            <person name="Yoshikawa Y."/>
            <person name="Matsunawa H."/>
            <person name="Ichihara T."/>
            <person name="Shiohata N."/>
            <person name="Sano S."/>
            <person name="Moriya S."/>
            <person name="Momiyama H."/>
            <person name="Satoh N."/>
            <person name="Takami S."/>
            <person name="Terashima Y."/>
            <person name="Suzuki O."/>
            <person name="Nakagawa S."/>
            <person name="Senoh A."/>
            <person name="Mizoguchi H."/>
            <person name="Goto Y."/>
            <person name="Shimizu F."/>
            <person name="Wakebe H."/>
            <person name="Hishigaki H."/>
            <person name="Watanabe T."/>
            <person name="Sugiyama A."/>
            <person name="Takemoto M."/>
            <person name="Kawakami B."/>
            <person name="Yamazaki M."/>
            <person name="Watanabe K."/>
            <person name="Kumagai A."/>
            <person name="Itakura S."/>
            <person name="Fukuzumi Y."/>
            <person name="Fujimori Y."/>
            <person name="Komiyama M."/>
            <person name="Tashiro H."/>
            <person name="Tanigami A."/>
            <person name="Fujiwara T."/>
            <person name="Ono T."/>
            <person name="Yamada K."/>
            <person name="Fujii Y."/>
            <person name="Ozaki K."/>
            <person name="Hirao M."/>
            <person name="Ohmori Y."/>
            <person name="Kawabata A."/>
            <person name="Hikiji T."/>
            <person name="Kobatake N."/>
            <person name="Inagaki H."/>
            <person name="Ikema Y."/>
            <person name="Okamoto S."/>
            <person name="Okitani R."/>
            <person name="Kawakami T."/>
            <person name="Noguchi S."/>
            <person name="Itoh T."/>
            <person name="Shigeta K."/>
            <person name="Senba T."/>
            <person name="Matsumura K."/>
            <person name="Nakajima Y."/>
            <person name="Mizuno T."/>
            <person name="Morinaga M."/>
            <person name="Sasaki M."/>
            <person name="Togashi T."/>
            <person name="Oyama M."/>
            <person name="Hata H."/>
            <person name="Watanabe M."/>
            <person name="Komatsu T."/>
            <person name="Mizushima-Sugano J."/>
            <person name="Satoh T."/>
            <person name="Shirai Y."/>
            <person name="Takahashi Y."/>
            <person name="Nakagawa K."/>
            <person name="Okumura K."/>
            <person name="Nagase T."/>
            <person name="Nomura N."/>
            <person name="Kikuchi H."/>
            <person name="Masuho Y."/>
            <person name="Yamashita R."/>
            <person name="Nakai K."/>
            <person name="Yada T."/>
            <person name="Nakamura Y."/>
            <person name="Ohara O."/>
            <person name="Isogai T."/>
            <person name="Sugano S."/>
        </authorList>
    </citation>
    <scope>NUCLEOTIDE SEQUENCE [LARGE SCALE MRNA]</scope>
    <source>
        <tissue>Testis</tissue>
    </source>
</reference>
<reference key="2">
    <citation type="journal article" date="2004" name="Nature">
        <title>The DNA sequence and biology of human chromosome 19.</title>
        <authorList>
            <person name="Grimwood J."/>
            <person name="Gordon L.A."/>
            <person name="Olsen A.S."/>
            <person name="Terry A."/>
            <person name="Schmutz J."/>
            <person name="Lamerdin J.E."/>
            <person name="Hellsten U."/>
            <person name="Goodstein D."/>
            <person name="Couronne O."/>
            <person name="Tran-Gyamfi M."/>
            <person name="Aerts A."/>
            <person name="Altherr M."/>
            <person name="Ashworth L."/>
            <person name="Bajorek E."/>
            <person name="Black S."/>
            <person name="Branscomb E."/>
            <person name="Caenepeel S."/>
            <person name="Carrano A.V."/>
            <person name="Caoile C."/>
            <person name="Chan Y.M."/>
            <person name="Christensen M."/>
            <person name="Cleland C.A."/>
            <person name="Copeland A."/>
            <person name="Dalin E."/>
            <person name="Dehal P."/>
            <person name="Denys M."/>
            <person name="Detter J.C."/>
            <person name="Escobar J."/>
            <person name="Flowers D."/>
            <person name="Fotopulos D."/>
            <person name="Garcia C."/>
            <person name="Georgescu A.M."/>
            <person name="Glavina T."/>
            <person name="Gomez M."/>
            <person name="Gonzales E."/>
            <person name="Groza M."/>
            <person name="Hammon N."/>
            <person name="Hawkins T."/>
            <person name="Haydu L."/>
            <person name="Ho I."/>
            <person name="Huang W."/>
            <person name="Israni S."/>
            <person name="Jett J."/>
            <person name="Kadner K."/>
            <person name="Kimball H."/>
            <person name="Kobayashi A."/>
            <person name="Larionov V."/>
            <person name="Leem S.-H."/>
            <person name="Lopez F."/>
            <person name="Lou Y."/>
            <person name="Lowry S."/>
            <person name="Malfatti S."/>
            <person name="Martinez D."/>
            <person name="McCready P.M."/>
            <person name="Medina C."/>
            <person name="Morgan J."/>
            <person name="Nelson K."/>
            <person name="Nolan M."/>
            <person name="Ovcharenko I."/>
            <person name="Pitluck S."/>
            <person name="Pollard M."/>
            <person name="Popkie A.P."/>
            <person name="Predki P."/>
            <person name="Quan G."/>
            <person name="Ramirez L."/>
            <person name="Rash S."/>
            <person name="Retterer J."/>
            <person name="Rodriguez A."/>
            <person name="Rogers S."/>
            <person name="Salamov A."/>
            <person name="Salazar A."/>
            <person name="She X."/>
            <person name="Smith D."/>
            <person name="Slezak T."/>
            <person name="Solovyev V."/>
            <person name="Thayer N."/>
            <person name="Tice H."/>
            <person name="Tsai M."/>
            <person name="Ustaszewska A."/>
            <person name="Vo N."/>
            <person name="Wagner M."/>
            <person name="Wheeler J."/>
            <person name="Wu K."/>
            <person name="Xie G."/>
            <person name="Yang J."/>
            <person name="Dubchak I."/>
            <person name="Furey T.S."/>
            <person name="DeJong P."/>
            <person name="Dickson M."/>
            <person name="Gordon D."/>
            <person name="Eichler E.E."/>
            <person name="Pennacchio L.A."/>
            <person name="Richardson P."/>
            <person name="Stubbs L."/>
            <person name="Rokhsar D.S."/>
            <person name="Myers R.M."/>
            <person name="Rubin E.M."/>
            <person name="Lucas S.M."/>
        </authorList>
    </citation>
    <scope>NUCLEOTIDE SEQUENCE [LARGE SCALE GENOMIC DNA]</scope>
</reference>
<reference key="3">
    <citation type="journal article" date="2004" name="Genome Res.">
        <title>The status, quality, and expansion of the NIH full-length cDNA project: the Mammalian Gene Collection (MGC).</title>
        <authorList>
            <consortium name="The MGC Project Team"/>
        </authorList>
    </citation>
    <scope>NUCLEOTIDE SEQUENCE [LARGE SCALE MRNA]</scope>
    <scope>VARIANTS GLU-434 AND THR-444</scope>
    <source>
        <tissue>Brain</tissue>
    </source>
</reference>
<reference key="4">
    <citation type="journal article" date="2007" name="BMC Genomics">
        <title>The full-ORF clone resource of the German cDNA consortium.</title>
        <authorList>
            <person name="Bechtel S."/>
            <person name="Rosenfelder H."/>
            <person name="Duda A."/>
            <person name="Schmidt C.P."/>
            <person name="Ernst U."/>
            <person name="Wellenreuther R."/>
            <person name="Mehrle A."/>
            <person name="Schuster C."/>
            <person name="Bahr A."/>
            <person name="Bloecker H."/>
            <person name="Heubner D."/>
            <person name="Hoerlein A."/>
            <person name="Michel G."/>
            <person name="Wedler H."/>
            <person name="Koehrer K."/>
            <person name="Ottenwaelder B."/>
            <person name="Poustka A."/>
            <person name="Wiemann S."/>
            <person name="Schupp I."/>
        </authorList>
    </citation>
    <scope>NUCLEOTIDE SEQUENCE [LARGE SCALE MRNA] OF 146-499</scope>
    <scope>VARIANT THR-444</scope>
    <source>
        <tissue>Testis</tissue>
    </source>
</reference>
<evidence type="ECO:0000250" key="1">
    <source>
        <dbReference type="UniProtKB" id="Q9D4K7"/>
    </source>
</evidence>
<evidence type="ECO:0000255" key="2"/>
<evidence type="ECO:0000269" key="3">
    <source>
    </source>
</evidence>
<evidence type="ECO:0000269" key="4">
    <source>
    </source>
</evidence>
<evidence type="ECO:0000312" key="5">
    <source>
        <dbReference type="HGNC" id="HGNC:26866"/>
    </source>
</evidence>
<comment type="function">
    <text evidence="1">Microtubule inner protein (MIP) part of the dynein-decorated doublet microtubules (DMTs) in sperm flagellar axoneme, which is required for motile flagellum beating (By similarity). Forms an extensive interaction network cross-linking the lumen of axonemal doublet microtubules (By similarity).</text>
</comment>
<comment type="subunit">
    <text evidence="1">Microtubule inner protein component of sperm flagellar doublet microtubules.</text>
</comment>
<comment type="interaction">
    <interactant intactId="EBI-10818513">
        <id>Q8IYK2</id>
    </interactant>
    <interactant intactId="EBI-739552">
        <id>P43364</id>
        <label>MAGEA11</label>
    </interactant>
    <organismsDiffer>false</organismsDiffer>
    <experiments>3</experiments>
</comment>
<comment type="interaction">
    <interactant intactId="EBI-10818513">
        <id>Q8IYK2</id>
    </interactant>
    <interactant intactId="EBI-6165891">
        <id>Q14696</id>
        <label>MESD</label>
    </interactant>
    <organismsDiffer>false</organismsDiffer>
    <experiments>3</experiments>
</comment>
<comment type="subcellular location">
    <subcellularLocation>
        <location evidence="1">Cytoplasm</location>
        <location evidence="1">Cytoskeleton</location>
        <location evidence="1">Flagellum axoneme</location>
    </subcellularLocation>
</comment>
<protein>
    <recommendedName>
        <fullName evidence="5">Tektin-like protein 1</fullName>
    </recommendedName>
    <alternativeName>
        <fullName>Coiled-coil domain-containing protein 105</fullName>
    </alternativeName>
</protein>